<sequence length="257" mass="27961">MRILLTNDDGVHAGGLAALERIARTLSDDVWIVAPETDQSGLAHSLSLSEPLRLRKISDKHFALRGTPTDCVIMGIRQVMDIKPDLVLSGVNSGSNVADDVTYSGTIAGAIEGTMQGVRSFALSQAYLYEDGARIVPWEVCETHAPALLEKLMVLDLPDGTFLNLNFPNCRPDEVDGAEVTMQGKLAFNLQVDARSDGRGFPYYWLKFGERAGAFIEGTDIHALKHNKISVTPLKLDLTDYSVTDRVARALGYGAQV</sequence>
<accession>Q2K966</accession>
<dbReference type="EC" id="3.1.3.5" evidence="1"/>
<dbReference type="EMBL" id="CP000133">
    <property type="protein sequence ID" value="ABC90620.1"/>
    <property type="molecule type" value="Genomic_DNA"/>
</dbReference>
<dbReference type="RefSeq" id="WP_011425117.1">
    <property type="nucleotide sequence ID" value="NC_007761.1"/>
</dbReference>
<dbReference type="SMR" id="Q2K966"/>
<dbReference type="KEGG" id="ret:RHE_CH01827"/>
<dbReference type="eggNOG" id="COG0496">
    <property type="taxonomic scope" value="Bacteria"/>
</dbReference>
<dbReference type="HOGENOM" id="CLU_045192_1_2_5"/>
<dbReference type="OrthoDB" id="9780815at2"/>
<dbReference type="Proteomes" id="UP000001936">
    <property type="component" value="Chromosome"/>
</dbReference>
<dbReference type="GO" id="GO:0005737">
    <property type="term" value="C:cytoplasm"/>
    <property type="evidence" value="ECO:0007669"/>
    <property type="project" value="UniProtKB-SubCell"/>
</dbReference>
<dbReference type="GO" id="GO:0008254">
    <property type="term" value="F:3'-nucleotidase activity"/>
    <property type="evidence" value="ECO:0007669"/>
    <property type="project" value="TreeGrafter"/>
</dbReference>
<dbReference type="GO" id="GO:0008253">
    <property type="term" value="F:5'-nucleotidase activity"/>
    <property type="evidence" value="ECO:0007669"/>
    <property type="project" value="UniProtKB-UniRule"/>
</dbReference>
<dbReference type="GO" id="GO:0004309">
    <property type="term" value="F:exopolyphosphatase activity"/>
    <property type="evidence" value="ECO:0007669"/>
    <property type="project" value="TreeGrafter"/>
</dbReference>
<dbReference type="GO" id="GO:0046872">
    <property type="term" value="F:metal ion binding"/>
    <property type="evidence" value="ECO:0007669"/>
    <property type="project" value="UniProtKB-UniRule"/>
</dbReference>
<dbReference type="GO" id="GO:0000166">
    <property type="term" value="F:nucleotide binding"/>
    <property type="evidence" value="ECO:0007669"/>
    <property type="project" value="UniProtKB-KW"/>
</dbReference>
<dbReference type="FunFam" id="3.40.1210.10:FF:000001">
    <property type="entry name" value="5'/3'-nucleotidase SurE"/>
    <property type="match status" value="1"/>
</dbReference>
<dbReference type="Gene3D" id="3.40.1210.10">
    <property type="entry name" value="Survival protein SurE-like phosphatase/nucleotidase"/>
    <property type="match status" value="1"/>
</dbReference>
<dbReference type="HAMAP" id="MF_00060">
    <property type="entry name" value="SurE"/>
    <property type="match status" value="1"/>
</dbReference>
<dbReference type="InterPro" id="IPR030048">
    <property type="entry name" value="SurE"/>
</dbReference>
<dbReference type="InterPro" id="IPR002828">
    <property type="entry name" value="SurE-like_Pase/nucleotidase"/>
</dbReference>
<dbReference type="InterPro" id="IPR036523">
    <property type="entry name" value="SurE-like_sf"/>
</dbReference>
<dbReference type="NCBIfam" id="NF001490">
    <property type="entry name" value="PRK00346.1-4"/>
    <property type="match status" value="1"/>
</dbReference>
<dbReference type="NCBIfam" id="TIGR00087">
    <property type="entry name" value="surE"/>
    <property type="match status" value="1"/>
</dbReference>
<dbReference type="PANTHER" id="PTHR30457">
    <property type="entry name" value="5'-NUCLEOTIDASE SURE"/>
    <property type="match status" value="1"/>
</dbReference>
<dbReference type="PANTHER" id="PTHR30457:SF12">
    <property type="entry name" value="5'_3'-NUCLEOTIDASE SURE"/>
    <property type="match status" value="1"/>
</dbReference>
<dbReference type="Pfam" id="PF01975">
    <property type="entry name" value="SurE"/>
    <property type="match status" value="1"/>
</dbReference>
<dbReference type="SUPFAM" id="SSF64167">
    <property type="entry name" value="SurE-like"/>
    <property type="match status" value="1"/>
</dbReference>
<feature type="chain" id="PRO_1000007777" description="5'-nucleotidase SurE">
    <location>
        <begin position="1"/>
        <end position="257"/>
    </location>
</feature>
<feature type="binding site" evidence="1">
    <location>
        <position position="8"/>
    </location>
    <ligand>
        <name>a divalent metal cation</name>
        <dbReference type="ChEBI" id="CHEBI:60240"/>
    </ligand>
</feature>
<feature type="binding site" evidence="1">
    <location>
        <position position="9"/>
    </location>
    <ligand>
        <name>a divalent metal cation</name>
        <dbReference type="ChEBI" id="CHEBI:60240"/>
    </ligand>
</feature>
<feature type="binding site" evidence="1">
    <location>
        <position position="40"/>
    </location>
    <ligand>
        <name>a divalent metal cation</name>
        <dbReference type="ChEBI" id="CHEBI:60240"/>
    </ligand>
</feature>
<feature type="binding site" evidence="1">
    <location>
        <position position="92"/>
    </location>
    <ligand>
        <name>a divalent metal cation</name>
        <dbReference type="ChEBI" id="CHEBI:60240"/>
    </ligand>
</feature>
<organism>
    <name type="scientific">Rhizobium etli (strain ATCC 51251 / DSM 11541 / JCM 21823 / NBRC 15573 / CFN 42)</name>
    <dbReference type="NCBI Taxonomy" id="347834"/>
    <lineage>
        <taxon>Bacteria</taxon>
        <taxon>Pseudomonadati</taxon>
        <taxon>Pseudomonadota</taxon>
        <taxon>Alphaproteobacteria</taxon>
        <taxon>Hyphomicrobiales</taxon>
        <taxon>Rhizobiaceae</taxon>
        <taxon>Rhizobium/Agrobacterium group</taxon>
        <taxon>Rhizobium</taxon>
    </lineage>
</organism>
<gene>
    <name evidence="1" type="primary">surE</name>
    <name type="ordered locus">RHE_CH01827</name>
</gene>
<reference key="1">
    <citation type="journal article" date="2006" name="Proc. Natl. Acad. Sci. U.S.A.">
        <title>The partitioned Rhizobium etli genome: genetic and metabolic redundancy in seven interacting replicons.</title>
        <authorList>
            <person name="Gonzalez V."/>
            <person name="Santamaria R.I."/>
            <person name="Bustos P."/>
            <person name="Hernandez-Gonzalez I."/>
            <person name="Medrano-Soto A."/>
            <person name="Moreno-Hagelsieb G."/>
            <person name="Janga S.C."/>
            <person name="Ramirez M.A."/>
            <person name="Jimenez-Jacinto V."/>
            <person name="Collado-Vides J."/>
            <person name="Davila G."/>
        </authorList>
    </citation>
    <scope>NUCLEOTIDE SEQUENCE [LARGE SCALE GENOMIC DNA]</scope>
    <source>
        <strain>ATCC 51251 / DSM 11541 / JCM 21823 / NBRC 15573 / CFN 42</strain>
    </source>
</reference>
<keyword id="KW-0963">Cytoplasm</keyword>
<keyword id="KW-0378">Hydrolase</keyword>
<keyword id="KW-0479">Metal-binding</keyword>
<keyword id="KW-0547">Nucleotide-binding</keyword>
<keyword id="KW-1185">Reference proteome</keyword>
<proteinExistence type="inferred from homology"/>
<evidence type="ECO:0000255" key="1">
    <source>
        <dbReference type="HAMAP-Rule" id="MF_00060"/>
    </source>
</evidence>
<protein>
    <recommendedName>
        <fullName evidence="1">5'-nucleotidase SurE</fullName>
        <ecNumber evidence="1">3.1.3.5</ecNumber>
    </recommendedName>
    <alternativeName>
        <fullName evidence="1">Nucleoside 5'-monophosphate phosphohydrolase</fullName>
    </alternativeName>
</protein>
<name>SURE_RHIEC</name>
<comment type="function">
    <text evidence="1">Nucleotidase that shows phosphatase activity on nucleoside 5'-monophosphates.</text>
</comment>
<comment type="catalytic activity">
    <reaction evidence="1">
        <text>a ribonucleoside 5'-phosphate + H2O = a ribonucleoside + phosphate</text>
        <dbReference type="Rhea" id="RHEA:12484"/>
        <dbReference type="ChEBI" id="CHEBI:15377"/>
        <dbReference type="ChEBI" id="CHEBI:18254"/>
        <dbReference type="ChEBI" id="CHEBI:43474"/>
        <dbReference type="ChEBI" id="CHEBI:58043"/>
        <dbReference type="EC" id="3.1.3.5"/>
    </reaction>
</comment>
<comment type="cofactor">
    <cofactor evidence="1">
        <name>a divalent metal cation</name>
        <dbReference type="ChEBI" id="CHEBI:60240"/>
    </cofactor>
    <text evidence="1">Binds 1 divalent metal cation per subunit.</text>
</comment>
<comment type="subcellular location">
    <subcellularLocation>
        <location evidence="1">Cytoplasm</location>
    </subcellularLocation>
</comment>
<comment type="similarity">
    <text evidence="1">Belongs to the SurE nucleotidase family.</text>
</comment>